<dbReference type="EC" id="1.1.1.23" evidence="1"/>
<dbReference type="EMBL" id="CP000111">
    <property type="protein sequence ID" value="ABB50641.1"/>
    <property type="molecule type" value="Genomic_DNA"/>
</dbReference>
<dbReference type="SMR" id="Q318Q4"/>
<dbReference type="STRING" id="74546.PMT9312_1581"/>
<dbReference type="KEGG" id="pmi:PMT9312_1581"/>
<dbReference type="eggNOG" id="COG0141">
    <property type="taxonomic scope" value="Bacteria"/>
</dbReference>
<dbReference type="HOGENOM" id="CLU_006732_3_3_3"/>
<dbReference type="UniPathway" id="UPA00031">
    <property type="reaction ID" value="UER00014"/>
</dbReference>
<dbReference type="Proteomes" id="UP000002715">
    <property type="component" value="Chromosome"/>
</dbReference>
<dbReference type="GO" id="GO:0005829">
    <property type="term" value="C:cytosol"/>
    <property type="evidence" value="ECO:0007669"/>
    <property type="project" value="TreeGrafter"/>
</dbReference>
<dbReference type="GO" id="GO:0004399">
    <property type="term" value="F:histidinol dehydrogenase activity"/>
    <property type="evidence" value="ECO:0007669"/>
    <property type="project" value="UniProtKB-UniRule"/>
</dbReference>
<dbReference type="GO" id="GO:0051287">
    <property type="term" value="F:NAD binding"/>
    <property type="evidence" value="ECO:0007669"/>
    <property type="project" value="InterPro"/>
</dbReference>
<dbReference type="GO" id="GO:0008270">
    <property type="term" value="F:zinc ion binding"/>
    <property type="evidence" value="ECO:0007669"/>
    <property type="project" value="UniProtKB-UniRule"/>
</dbReference>
<dbReference type="GO" id="GO:0000105">
    <property type="term" value="P:L-histidine biosynthetic process"/>
    <property type="evidence" value="ECO:0007669"/>
    <property type="project" value="UniProtKB-UniRule"/>
</dbReference>
<dbReference type="CDD" id="cd06572">
    <property type="entry name" value="Histidinol_dh"/>
    <property type="match status" value="1"/>
</dbReference>
<dbReference type="FunFam" id="3.40.50.1980:FF:000001">
    <property type="entry name" value="Histidinol dehydrogenase"/>
    <property type="match status" value="1"/>
</dbReference>
<dbReference type="FunFam" id="3.40.50.1980:FF:000026">
    <property type="entry name" value="Histidinol dehydrogenase"/>
    <property type="match status" value="1"/>
</dbReference>
<dbReference type="Gene3D" id="1.20.5.1300">
    <property type="match status" value="1"/>
</dbReference>
<dbReference type="Gene3D" id="3.40.50.1980">
    <property type="entry name" value="Nitrogenase molybdenum iron protein domain"/>
    <property type="match status" value="2"/>
</dbReference>
<dbReference type="HAMAP" id="MF_01024">
    <property type="entry name" value="HisD"/>
    <property type="match status" value="1"/>
</dbReference>
<dbReference type="InterPro" id="IPR016161">
    <property type="entry name" value="Ald_DH/histidinol_DH"/>
</dbReference>
<dbReference type="InterPro" id="IPR001692">
    <property type="entry name" value="Histidinol_DH_CS"/>
</dbReference>
<dbReference type="InterPro" id="IPR022695">
    <property type="entry name" value="Histidinol_DH_monofunct"/>
</dbReference>
<dbReference type="InterPro" id="IPR012131">
    <property type="entry name" value="Hstdl_DH"/>
</dbReference>
<dbReference type="NCBIfam" id="TIGR00069">
    <property type="entry name" value="hisD"/>
    <property type="match status" value="1"/>
</dbReference>
<dbReference type="PANTHER" id="PTHR21256:SF2">
    <property type="entry name" value="HISTIDINE BIOSYNTHESIS TRIFUNCTIONAL PROTEIN"/>
    <property type="match status" value="1"/>
</dbReference>
<dbReference type="PANTHER" id="PTHR21256">
    <property type="entry name" value="HISTIDINOL DEHYDROGENASE HDH"/>
    <property type="match status" value="1"/>
</dbReference>
<dbReference type="Pfam" id="PF00815">
    <property type="entry name" value="Histidinol_dh"/>
    <property type="match status" value="1"/>
</dbReference>
<dbReference type="PIRSF" id="PIRSF000099">
    <property type="entry name" value="Histidinol_dh"/>
    <property type="match status" value="1"/>
</dbReference>
<dbReference type="PRINTS" id="PR00083">
    <property type="entry name" value="HOLDHDRGNASE"/>
</dbReference>
<dbReference type="SUPFAM" id="SSF53720">
    <property type="entry name" value="ALDH-like"/>
    <property type="match status" value="1"/>
</dbReference>
<dbReference type="PROSITE" id="PS00611">
    <property type="entry name" value="HISOL_DEHYDROGENASE"/>
    <property type="match status" value="1"/>
</dbReference>
<gene>
    <name evidence="1" type="primary">hisD</name>
    <name type="ordered locus">PMT9312_1581</name>
</gene>
<keyword id="KW-0028">Amino-acid biosynthesis</keyword>
<keyword id="KW-0368">Histidine biosynthesis</keyword>
<keyword id="KW-0479">Metal-binding</keyword>
<keyword id="KW-0520">NAD</keyword>
<keyword id="KW-0560">Oxidoreductase</keyword>
<keyword id="KW-0862">Zinc</keyword>
<protein>
    <recommendedName>
        <fullName evidence="1">Histidinol dehydrogenase</fullName>
        <shortName evidence="1">HDH</shortName>
        <ecNumber evidence="1">1.1.1.23</ecNumber>
    </recommendedName>
</protein>
<accession>Q318Q4</accession>
<evidence type="ECO:0000255" key="1">
    <source>
        <dbReference type="HAMAP-Rule" id="MF_01024"/>
    </source>
</evidence>
<sequence length="440" mass="48592">MGREPFNLKNLEMRIINNKKDAIQELKRISSRTNSENNNKINLIVEEILQEVKTYGDIAVEKYTKKFDGFNPDPMQISEDHLKDAWDEIDSNLKRSLEVAHKRIKKFHEKEIPQSFTIKGEHGDTVQRRWRPVKNAGIYIPGGRAAYPSTVLMNAIPAKVAGVEEIIMVSPGNKEGEINKTVLAAAHLSGIKKVFRIGGAQAIGALAFGTNQINKVDVITGPGNIYVTTAKKLIYGSTGIDSLAGPSEILVIADETAQSTHIASDLLAQAEHDPLASSILLTTSKNQAKEVLEELYKKIDDHPRKEICMQSIKNWGLIVICENYELCIELSNNFAPEHLEILALDSKKILEGIENAGAIFLGKWTPEAVGDYLAGPNHTLPTSGNSRFSGSLGVETFMKNTSIIEFNEESLKVNSLDIINLAESEGLHSHANSVKIRFED</sequence>
<feature type="chain" id="PRO_0000229861" description="Histidinol dehydrogenase">
    <location>
        <begin position="1"/>
        <end position="440"/>
    </location>
</feature>
<feature type="active site" description="Proton acceptor" evidence="1">
    <location>
        <position position="337"/>
    </location>
</feature>
<feature type="active site" description="Proton acceptor" evidence="1">
    <location>
        <position position="338"/>
    </location>
</feature>
<feature type="binding site" evidence="1">
    <location>
        <position position="139"/>
    </location>
    <ligand>
        <name>NAD(+)</name>
        <dbReference type="ChEBI" id="CHEBI:57540"/>
    </ligand>
</feature>
<feature type="binding site" evidence="1">
    <location>
        <position position="201"/>
    </location>
    <ligand>
        <name>NAD(+)</name>
        <dbReference type="ChEBI" id="CHEBI:57540"/>
    </ligand>
</feature>
<feature type="binding site" evidence="1">
    <location>
        <position position="224"/>
    </location>
    <ligand>
        <name>NAD(+)</name>
        <dbReference type="ChEBI" id="CHEBI:57540"/>
    </ligand>
</feature>
<feature type="binding site" evidence="1">
    <location>
        <position position="247"/>
    </location>
    <ligand>
        <name>substrate</name>
    </ligand>
</feature>
<feature type="binding site" evidence="1">
    <location>
        <position position="269"/>
    </location>
    <ligand>
        <name>substrate</name>
    </ligand>
</feature>
<feature type="binding site" evidence="1">
    <location>
        <position position="269"/>
    </location>
    <ligand>
        <name>Zn(2+)</name>
        <dbReference type="ChEBI" id="CHEBI:29105"/>
    </ligand>
</feature>
<feature type="binding site" evidence="1">
    <location>
        <position position="272"/>
    </location>
    <ligand>
        <name>substrate</name>
    </ligand>
</feature>
<feature type="binding site" evidence="1">
    <location>
        <position position="272"/>
    </location>
    <ligand>
        <name>Zn(2+)</name>
        <dbReference type="ChEBI" id="CHEBI:29105"/>
    </ligand>
</feature>
<feature type="binding site" evidence="1">
    <location>
        <position position="338"/>
    </location>
    <ligand>
        <name>substrate</name>
    </ligand>
</feature>
<feature type="binding site" evidence="1">
    <location>
        <position position="371"/>
    </location>
    <ligand>
        <name>substrate</name>
    </ligand>
</feature>
<feature type="binding site" evidence="1">
    <location>
        <position position="371"/>
    </location>
    <ligand>
        <name>Zn(2+)</name>
        <dbReference type="ChEBI" id="CHEBI:29105"/>
    </ligand>
</feature>
<feature type="binding site" evidence="1">
    <location>
        <position position="425"/>
    </location>
    <ligand>
        <name>substrate</name>
    </ligand>
</feature>
<feature type="binding site" evidence="1">
    <location>
        <position position="430"/>
    </location>
    <ligand>
        <name>substrate</name>
    </ligand>
</feature>
<feature type="binding site" evidence="1">
    <location>
        <position position="430"/>
    </location>
    <ligand>
        <name>Zn(2+)</name>
        <dbReference type="ChEBI" id="CHEBI:29105"/>
    </ligand>
</feature>
<proteinExistence type="inferred from homology"/>
<organism>
    <name type="scientific">Prochlorococcus marinus (strain MIT 9312)</name>
    <dbReference type="NCBI Taxonomy" id="74546"/>
    <lineage>
        <taxon>Bacteria</taxon>
        <taxon>Bacillati</taxon>
        <taxon>Cyanobacteriota</taxon>
        <taxon>Cyanophyceae</taxon>
        <taxon>Synechococcales</taxon>
        <taxon>Prochlorococcaceae</taxon>
        <taxon>Prochlorococcus</taxon>
    </lineage>
</organism>
<comment type="function">
    <text evidence="1">Catalyzes the sequential NAD-dependent oxidations of L-histidinol to L-histidinaldehyde and then to L-histidine.</text>
</comment>
<comment type="catalytic activity">
    <reaction evidence="1">
        <text>L-histidinol + 2 NAD(+) + H2O = L-histidine + 2 NADH + 3 H(+)</text>
        <dbReference type="Rhea" id="RHEA:20641"/>
        <dbReference type="ChEBI" id="CHEBI:15377"/>
        <dbReference type="ChEBI" id="CHEBI:15378"/>
        <dbReference type="ChEBI" id="CHEBI:57540"/>
        <dbReference type="ChEBI" id="CHEBI:57595"/>
        <dbReference type="ChEBI" id="CHEBI:57699"/>
        <dbReference type="ChEBI" id="CHEBI:57945"/>
        <dbReference type="EC" id="1.1.1.23"/>
    </reaction>
</comment>
<comment type="cofactor">
    <cofactor evidence="1">
        <name>Zn(2+)</name>
        <dbReference type="ChEBI" id="CHEBI:29105"/>
    </cofactor>
    <text evidence="1">Binds 1 zinc ion per subunit.</text>
</comment>
<comment type="pathway">
    <text evidence="1">Amino-acid biosynthesis; L-histidine biosynthesis; L-histidine from 5-phospho-alpha-D-ribose 1-diphosphate: step 9/9.</text>
</comment>
<comment type="similarity">
    <text evidence="1">Belongs to the histidinol dehydrogenase family.</text>
</comment>
<name>HISX_PROM9</name>
<reference key="1">
    <citation type="journal article" date="2006" name="Science">
        <title>Genomic islands and the ecology and evolution of Prochlorococcus.</title>
        <authorList>
            <person name="Coleman M.L."/>
            <person name="Sullivan M.B."/>
            <person name="Martiny A.C."/>
            <person name="Steglich C."/>
            <person name="Barry K."/>
            <person name="Delong E.F."/>
            <person name="Chisholm S.W."/>
        </authorList>
    </citation>
    <scope>NUCLEOTIDE SEQUENCE [LARGE SCALE GENOMIC DNA]</scope>
    <source>
        <strain>MIT 9312</strain>
    </source>
</reference>